<sequence length="103" mass="11551">MIKSELVQIVAARNPHLYHRDVENIVNAVLDEITDALAAGNRVELRGFGAFSVKNRPSRSGRNPRTGDSVFVEEKWVPFFKTGKELRERLNPGMNGNDNGEDD</sequence>
<evidence type="ECO:0000255" key="1">
    <source>
        <dbReference type="HAMAP-Rule" id="MF_00381"/>
    </source>
</evidence>
<gene>
    <name evidence="1" type="primary">ihfB</name>
    <name evidence="1" type="synonym">himD</name>
    <name type="ordered locus">Smed_0021</name>
</gene>
<feature type="chain" id="PRO_1000060671" description="Integration host factor subunit beta">
    <location>
        <begin position="1"/>
        <end position="103"/>
    </location>
</feature>
<name>IHFB_SINMW</name>
<protein>
    <recommendedName>
        <fullName evidence="1">Integration host factor subunit beta</fullName>
        <shortName evidence="1">IHF-beta</shortName>
    </recommendedName>
</protein>
<reference key="1">
    <citation type="submission" date="2007-06" db="EMBL/GenBank/DDBJ databases">
        <title>Complete sequence of Sinorhizobium medicae WSM419 chromosome.</title>
        <authorList>
            <consortium name="US DOE Joint Genome Institute"/>
            <person name="Copeland A."/>
            <person name="Lucas S."/>
            <person name="Lapidus A."/>
            <person name="Barry K."/>
            <person name="Glavina del Rio T."/>
            <person name="Dalin E."/>
            <person name="Tice H."/>
            <person name="Pitluck S."/>
            <person name="Chain P."/>
            <person name="Malfatti S."/>
            <person name="Shin M."/>
            <person name="Vergez L."/>
            <person name="Schmutz J."/>
            <person name="Larimer F."/>
            <person name="Land M."/>
            <person name="Hauser L."/>
            <person name="Kyrpides N."/>
            <person name="Mikhailova N."/>
            <person name="Reeve W.G."/>
            <person name="Richardson P."/>
        </authorList>
    </citation>
    <scope>NUCLEOTIDE SEQUENCE [LARGE SCALE GENOMIC DNA]</scope>
    <source>
        <strain>WSM419</strain>
    </source>
</reference>
<accession>A6U5F1</accession>
<keyword id="KW-0233">DNA recombination</keyword>
<keyword id="KW-0238">DNA-binding</keyword>
<keyword id="KW-0804">Transcription</keyword>
<keyword id="KW-0805">Transcription regulation</keyword>
<keyword id="KW-0810">Translation regulation</keyword>
<organism>
    <name type="scientific">Sinorhizobium medicae (strain WSM419)</name>
    <name type="common">Ensifer medicae</name>
    <dbReference type="NCBI Taxonomy" id="366394"/>
    <lineage>
        <taxon>Bacteria</taxon>
        <taxon>Pseudomonadati</taxon>
        <taxon>Pseudomonadota</taxon>
        <taxon>Alphaproteobacteria</taxon>
        <taxon>Hyphomicrobiales</taxon>
        <taxon>Rhizobiaceae</taxon>
        <taxon>Sinorhizobium/Ensifer group</taxon>
        <taxon>Sinorhizobium</taxon>
    </lineage>
</organism>
<proteinExistence type="inferred from homology"/>
<dbReference type="EMBL" id="CP000738">
    <property type="protein sequence ID" value="ABR58881.1"/>
    <property type="molecule type" value="Genomic_DNA"/>
</dbReference>
<dbReference type="RefSeq" id="WP_011974236.1">
    <property type="nucleotide sequence ID" value="NC_009636.1"/>
</dbReference>
<dbReference type="RefSeq" id="YP_001325716.1">
    <property type="nucleotide sequence ID" value="NC_009636.1"/>
</dbReference>
<dbReference type="SMR" id="A6U5F1"/>
<dbReference type="STRING" id="366394.Smed_0021"/>
<dbReference type="KEGG" id="smd:Smed_0021"/>
<dbReference type="PATRIC" id="fig|366394.8.peg.3075"/>
<dbReference type="eggNOG" id="COG0776">
    <property type="taxonomic scope" value="Bacteria"/>
</dbReference>
<dbReference type="HOGENOM" id="CLU_105066_2_1_5"/>
<dbReference type="OrthoDB" id="9804203at2"/>
<dbReference type="Proteomes" id="UP000001108">
    <property type="component" value="Chromosome"/>
</dbReference>
<dbReference type="GO" id="GO:0005694">
    <property type="term" value="C:chromosome"/>
    <property type="evidence" value="ECO:0007669"/>
    <property type="project" value="InterPro"/>
</dbReference>
<dbReference type="GO" id="GO:0005829">
    <property type="term" value="C:cytosol"/>
    <property type="evidence" value="ECO:0007669"/>
    <property type="project" value="TreeGrafter"/>
</dbReference>
<dbReference type="GO" id="GO:0003677">
    <property type="term" value="F:DNA binding"/>
    <property type="evidence" value="ECO:0007669"/>
    <property type="project" value="UniProtKB-UniRule"/>
</dbReference>
<dbReference type="GO" id="GO:0030527">
    <property type="term" value="F:structural constituent of chromatin"/>
    <property type="evidence" value="ECO:0007669"/>
    <property type="project" value="InterPro"/>
</dbReference>
<dbReference type="GO" id="GO:0006310">
    <property type="term" value="P:DNA recombination"/>
    <property type="evidence" value="ECO:0007669"/>
    <property type="project" value="UniProtKB-UniRule"/>
</dbReference>
<dbReference type="GO" id="GO:0006355">
    <property type="term" value="P:regulation of DNA-templated transcription"/>
    <property type="evidence" value="ECO:0007669"/>
    <property type="project" value="UniProtKB-UniRule"/>
</dbReference>
<dbReference type="GO" id="GO:0006417">
    <property type="term" value="P:regulation of translation"/>
    <property type="evidence" value="ECO:0007669"/>
    <property type="project" value="UniProtKB-UniRule"/>
</dbReference>
<dbReference type="CDD" id="cd13836">
    <property type="entry name" value="IHF_B"/>
    <property type="match status" value="1"/>
</dbReference>
<dbReference type="Gene3D" id="4.10.520.10">
    <property type="entry name" value="IHF-like DNA-binding proteins"/>
    <property type="match status" value="1"/>
</dbReference>
<dbReference type="HAMAP" id="MF_00381">
    <property type="entry name" value="IHF_beta"/>
    <property type="match status" value="1"/>
</dbReference>
<dbReference type="InterPro" id="IPR000119">
    <property type="entry name" value="Hist_DNA-bd"/>
</dbReference>
<dbReference type="InterPro" id="IPR020816">
    <property type="entry name" value="Histone-like_DNA-bd_CS"/>
</dbReference>
<dbReference type="InterPro" id="IPR010992">
    <property type="entry name" value="IHF-like_DNA-bd_dom_sf"/>
</dbReference>
<dbReference type="InterPro" id="IPR005685">
    <property type="entry name" value="IHF_beta"/>
</dbReference>
<dbReference type="NCBIfam" id="TIGR00988">
    <property type="entry name" value="hip"/>
    <property type="match status" value="1"/>
</dbReference>
<dbReference type="NCBIfam" id="NF001222">
    <property type="entry name" value="PRK00199.1"/>
    <property type="match status" value="1"/>
</dbReference>
<dbReference type="PANTHER" id="PTHR33175">
    <property type="entry name" value="DNA-BINDING PROTEIN HU"/>
    <property type="match status" value="1"/>
</dbReference>
<dbReference type="PANTHER" id="PTHR33175:SF5">
    <property type="entry name" value="INTEGRATION HOST FACTOR SUBUNIT BETA"/>
    <property type="match status" value="1"/>
</dbReference>
<dbReference type="Pfam" id="PF00216">
    <property type="entry name" value="Bac_DNA_binding"/>
    <property type="match status" value="1"/>
</dbReference>
<dbReference type="PRINTS" id="PR01727">
    <property type="entry name" value="DNABINDINGHU"/>
</dbReference>
<dbReference type="SMART" id="SM00411">
    <property type="entry name" value="BHL"/>
    <property type="match status" value="1"/>
</dbReference>
<dbReference type="SUPFAM" id="SSF47729">
    <property type="entry name" value="IHF-like DNA-binding proteins"/>
    <property type="match status" value="1"/>
</dbReference>
<dbReference type="PROSITE" id="PS00045">
    <property type="entry name" value="HISTONE_LIKE"/>
    <property type="match status" value="1"/>
</dbReference>
<comment type="function">
    <text evidence="1">This protein is one of the two subunits of integration host factor, a specific DNA-binding protein that functions in genetic recombination as well as in transcriptional and translational control.</text>
</comment>
<comment type="subunit">
    <text evidence="1">Heterodimer of an alpha and a beta chain.</text>
</comment>
<comment type="similarity">
    <text evidence="1">Belongs to the bacterial histone-like protein family.</text>
</comment>